<name>DUG3_YEAST</name>
<feature type="initiator methionine" description="Removed" evidence="1">
    <location>
        <position position="1"/>
    </location>
</feature>
<feature type="chain" id="PRO_0000203401" description="Probable glutamine amidotransferase DUG3">
    <location>
        <begin position="2"/>
        <end position="357"/>
    </location>
</feature>
<feature type="domain" description="Glutamine amidotransferase type-2" evidence="2">
    <location>
        <begin position="2"/>
        <end position="260"/>
    </location>
</feature>
<feature type="active site" description="For GATase activity" evidence="1">
    <location>
        <position position="2"/>
    </location>
</feature>
<accession>P53871</accession>
<accession>D6W0Z6</accession>
<dbReference type="EMBL" id="Z71467">
    <property type="protein sequence ID" value="CAA96085.1"/>
    <property type="molecule type" value="Genomic_DNA"/>
</dbReference>
<dbReference type="EMBL" id="AY692717">
    <property type="protein sequence ID" value="AAT92736.1"/>
    <property type="molecule type" value="Genomic_DNA"/>
</dbReference>
<dbReference type="EMBL" id="BK006947">
    <property type="protein sequence ID" value="DAA10362.1"/>
    <property type="molecule type" value="Genomic_DNA"/>
</dbReference>
<dbReference type="PIR" id="S63146">
    <property type="entry name" value="S63146"/>
</dbReference>
<dbReference type="RefSeq" id="NP_014208.1">
    <property type="nucleotide sequence ID" value="NM_001183029.1"/>
</dbReference>
<dbReference type="SMR" id="P53871"/>
<dbReference type="BioGRID" id="35642">
    <property type="interactions" value="24"/>
</dbReference>
<dbReference type="ComplexPortal" id="CPX-325">
    <property type="entry name" value="Glutathione hydrolase complex"/>
</dbReference>
<dbReference type="DIP" id="DIP-3956N"/>
<dbReference type="FunCoup" id="P53871">
    <property type="interactions" value="37"/>
</dbReference>
<dbReference type="IntAct" id="P53871">
    <property type="interactions" value="4"/>
</dbReference>
<dbReference type="STRING" id="4932.YNL191W"/>
<dbReference type="GlyGen" id="P53871">
    <property type="glycosylation" value="1 site"/>
</dbReference>
<dbReference type="PaxDb" id="4932-YNL191W"/>
<dbReference type="PeptideAtlas" id="P53871"/>
<dbReference type="EnsemblFungi" id="YNL191W_mRNA">
    <property type="protein sequence ID" value="YNL191W"/>
    <property type="gene ID" value="YNL191W"/>
</dbReference>
<dbReference type="GeneID" id="855530"/>
<dbReference type="KEGG" id="sce:YNL191W"/>
<dbReference type="AGR" id="SGD:S000005135"/>
<dbReference type="SGD" id="S000005135">
    <property type="gene designation" value="DUG3"/>
</dbReference>
<dbReference type="VEuPathDB" id="FungiDB:YNL191W"/>
<dbReference type="eggNOG" id="KOG1268">
    <property type="taxonomic scope" value="Eukaryota"/>
</dbReference>
<dbReference type="HOGENOM" id="CLU_042555_4_0_1"/>
<dbReference type="InParanoid" id="P53871"/>
<dbReference type="OMA" id="SVHPAWN"/>
<dbReference type="OrthoDB" id="14446at2759"/>
<dbReference type="BioCyc" id="MetaCyc:G3O-33202-MONOMER"/>
<dbReference type="BioCyc" id="YEAST:G3O-33202-MONOMER"/>
<dbReference type="BioGRID-ORCS" id="855530">
    <property type="hits" value="0 hits in 10 CRISPR screens"/>
</dbReference>
<dbReference type="PRO" id="PR:P53871"/>
<dbReference type="Proteomes" id="UP000002311">
    <property type="component" value="Chromosome XIV"/>
</dbReference>
<dbReference type="RNAct" id="P53871">
    <property type="molecule type" value="protein"/>
</dbReference>
<dbReference type="GO" id="GO:0005737">
    <property type="term" value="C:cytoplasm"/>
    <property type="evidence" value="ECO:0000314"/>
    <property type="project" value="SGD"/>
</dbReference>
<dbReference type="GO" id="GO:0061672">
    <property type="term" value="C:glutathione hydrolase complex"/>
    <property type="evidence" value="ECO:0000314"/>
    <property type="project" value="ComplexPortal"/>
</dbReference>
<dbReference type="GO" id="GO:0004044">
    <property type="term" value="F:amidophosphoribosyltransferase activity"/>
    <property type="evidence" value="ECO:0000250"/>
    <property type="project" value="SGD"/>
</dbReference>
<dbReference type="GO" id="GO:0008242">
    <property type="term" value="F:omega peptidase activity"/>
    <property type="evidence" value="ECO:0000316"/>
    <property type="project" value="SGD"/>
</dbReference>
<dbReference type="GO" id="GO:0008233">
    <property type="term" value="F:peptidase activity"/>
    <property type="evidence" value="ECO:0000316"/>
    <property type="project" value="SGD"/>
</dbReference>
<dbReference type="GO" id="GO:0006751">
    <property type="term" value="P:glutathione catabolic process"/>
    <property type="evidence" value="ECO:0000314"/>
    <property type="project" value="ComplexPortal"/>
</dbReference>
<dbReference type="CDD" id="cd01908">
    <property type="entry name" value="YafJ"/>
    <property type="match status" value="1"/>
</dbReference>
<dbReference type="FunFam" id="3.60.20.10:FF:000045">
    <property type="entry name" value="Glutamine amidotransferase DUG3"/>
    <property type="match status" value="1"/>
</dbReference>
<dbReference type="Gene3D" id="3.60.20.10">
    <property type="entry name" value="Glutamine Phosphoribosylpyrophosphate, subunit 1, domain 1"/>
    <property type="match status" value="1"/>
</dbReference>
<dbReference type="InterPro" id="IPR026869">
    <property type="entry name" value="EgtC-like"/>
</dbReference>
<dbReference type="InterPro" id="IPR052373">
    <property type="entry name" value="Gamma-glu_amide_hydrolase"/>
</dbReference>
<dbReference type="InterPro" id="IPR017932">
    <property type="entry name" value="GATase_2_dom"/>
</dbReference>
<dbReference type="InterPro" id="IPR029055">
    <property type="entry name" value="Ntn_hydrolases_N"/>
</dbReference>
<dbReference type="PANTHER" id="PTHR43187">
    <property type="entry name" value="GLUTAMINE AMIDOTRANSFERASE DUG3-RELATED"/>
    <property type="match status" value="1"/>
</dbReference>
<dbReference type="PANTHER" id="PTHR43187:SF1">
    <property type="entry name" value="GLUTAMINE AMIDOTRANSFERASE DUG3-RELATED"/>
    <property type="match status" value="1"/>
</dbReference>
<dbReference type="Pfam" id="PF13230">
    <property type="entry name" value="GATase_4"/>
    <property type="match status" value="1"/>
</dbReference>
<dbReference type="SUPFAM" id="SSF56235">
    <property type="entry name" value="N-terminal nucleophile aminohydrolases (Ntn hydrolases)"/>
    <property type="match status" value="1"/>
</dbReference>
<dbReference type="PROSITE" id="PS51278">
    <property type="entry name" value="GATASE_TYPE_2"/>
    <property type="match status" value="1"/>
</dbReference>
<gene>
    <name type="primary">DUG3</name>
    <name type="ordered locus">YNL191W</name>
    <name type="ORF">N1410</name>
</gene>
<comment type="function">
    <text evidence="5">Component of the GSH degradosomal complex involved in the degradation of glutathione (GSH) and other peptides containing a gamma-glu-X bond.</text>
</comment>
<comment type="subunit">
    <text evidence="5">Component of the GSH degradosomal complex composed of at least DUG1, DUG2 and DUG3.</text>
</comment>
<comment type="interaction">
    <interactant intactId="EBI-29079">
        <id>P53871</id>
    </interactant>
    <interactant intactId="EBI-21176">
        <id>P38149</id>
        <label>DUG2</label>
    </interactant>
    <organismsDiffer>false</organismsDiffer>
    <experiments>5</experiments>
</comment>
<comment type="subcellular location">
    <subcellularLocation>
        <location evidence="3 5">Cytoplasm</location>
    </subcellularLocation>
</comment>
<comment type="miscellaneous">
    <text evidence="4">Present with 7300 molecules/cell in log phase SD medium.</text>
</comment>
<comment type="similarity">
    <text evidence="6">Belongs to the DUG3 family.</text>
</comment>
<sequence length="357" mass="40181">MCRFLIFKGKQPIRLSHLLTRPAHSIINQSFDSRLRLDRRRPMNGDGFGVAYYPLDTELSEDGPCLFKAITPAWNNQNLSTLAEKTKSDLVFAHVRASTYGVLSETNCHPFTYHSLCFMHNGGISNFKGIKRKLLNHIKDEYLNFIQGSTDSECAFALFLDTLDKLGYDPKKQDGDFGNVALRKAMLRTIDYIRDWTKEANKDEAHVEPSLLNFAVTDGSTVVVSRYITSKTDEAASLHFSCGSSFVETSPGEYRVERLDRNQDVIMVASEPLTFERGDWTAVPTNSILTIKKQTILLHPIIDEYYQEDPLYLRSSTLAESKGLMGSIPLAKAVEKNVPPLEREGRTRPPTAVAHIA</sequence>
<proteinExistence type="evidence at protein level"/>
<evidence type="ECO:0000250" key="1"/>
<evidence type="ECO:0000255" key="2">
    <source>
        <dbReference type="PROSITE-ProRule" id="PRU00609"/>
    </source>
</evidence>
<evidence type="ECO:0000269" key="3">
    <source>
    </source>
</evidence>
<evidence type="ECO:0000269" key="4">
    <source>
    </source>
</evidence>
<evidence type="ECO:0000269" key="5">
    <source>
    </source>
</evidence>
<evidence type="ECO:0000305" key="6"/>
<organism>
    <name type="scientific">Saccharomyces cerevisiae (strain ATCC 204508 / S288c)</name>
    <name type="common">Baker's yeast</name>
    <dbReference type="NCBI Taxonomy" id="559292"/>
    <lineage>
        <taxon>Eukaryota</taxon>
        <taxon>Fungi</taxon>
        <taxon>Dikarya</taxon>
        <taxon>Ascomycota</taxon>
        <taxon>Saccharomycotina</taxon>
        <taxon>Saccharomycetes</taxon>
        <taxon>Saccharomycetales</taxon>
        <taxon>Saccharomycetaceae</taxon>
        <taxon>Saccharomyces</taxon>
    </lineage>
</organism>
<keyword id="KW-0963">Cytoplasm</keyword>
<keyword id="KW-0315">Glutamine amidotransferase</keyword>
<keyword id="KW-1185">Reference proteome</keyword>
<keyword id="KW-0808">Transferase</keyword>
<reference key="1">
    <citation type="journal article" date="1997" name="Nature">
        <title>The nucleotide sequence of Saccharomyces cerevisiae chromosome XIV and its evolutionary implications.</title>
        <authorList>
            <person name="Philippsen P."/>
            <person name="Kleine K."/>
            <person name="Poehlmann R."/>
            <person name="Duesterhoeft A."/>
            <person name="Hamberg K."/>
            <person name="Hegemann J.H."/>
            <person name="Obermaier B."/>
            <person name="Urrestarazu L.A."/>
            <person name="Aert R."/>
            <person name="Albermann K."/>
            <person name="Altmann R."/>
            <person name="Andre B."/>
            <person name="Baladron V."/>
            <person name="Ballesta J.P.G."/>
            <person name="Becam A.-M."/>
            <person name="Beinhauer J.D."/>
            <person name="Boskovic J."/>
            <person name="Buitrago M.J."/>
            <person name="Bussereau F."/>
            <person name="Coster F."/>
            <person name="Crouzet M."/>
            <person name="D'Angelo M."/>
            <person name="Dal Pero F."/>
            <person name="De Antoni A."/>
            <person name="del Rey F."/>
            <person name="Doignon F."/>
            <person name="Domdey H."/>
            <person name="Dubois E."/>
            <person name="Fiedler T.A."/>
            <person name="Fleig U."/>
            <person name="Floeth M."/>
            <person name="Fritz C."/>
            <person name="Gaillardin C."/>
            <person name="Garcia-Cantalejo J.M."/>
            <person name="Glansdorff N."/>
            <person name="Goffeau A."/>
            <person name="Gueldener U."/>
            <person name="Herbert C.J."/>
            <person name="Heumann K."/>
            <person name="Heuss-Neitzel D."/>
            <person name="Hilbert H."/>
            <person name="Hinni K."/>
            <person name="Iraqui Houssaini I."/>
            <person name="Jacquet M."/>
            <person name="Jimenez A."/>
            <person name="Jonniaux J.-L."/>
            <person name="Karpfinger-Hartl L."/>
            <person name="Lanfranchi G."/>
            <person name="Lepingle A."/>
            <person name="Levesque H."/>
            <person name="Lyck R."/>
            <person name="Maftahi M."/>
            <person name="Mallet L."/>
            <person name="Maurer C.T.C."/>
            <person name="Messenguy F."/>
            <person name="Mewes H.-W."/>
            <person name="Moestl D."/>
            <person name="Nasr F."/>
            <person name="Nicaud J.-M."/>
            <person name="Niedenthal R.K."/>
            <person name="Pandolfo D."/>
            <person name="Pierard A."/>
            <person name="Piravandi E."/>
            <person name="Planta R.J."/>
            <person name="Pohl T.M."/>
            <person name="Purnelle B."/>
            <person name="Rebischung C."/>
            <person name="Remacha M.A."/>
            <person name="Revuelta J.L."/>
            <person name="Rinke M."/>
            <person name="Saiz J.E."/>
            <person name="Sartorello F."/>
            <person name="Scherens B."/>
            <person name="Sen-Gupta M."/>
            <person name="Soler-Mira A."/>
            <person name="Urbanus J.H.M."/>
            <person name="Valle G."/>
            <person name="Van Dyck L."/>
            <person name="Verhasselt P."/>
            <person name="Vierendeels F."/>
            <person name="Vissers S."/>
            <person name="Voet M."/>
            <person name="Volckaert G."/>
            <person name="Wach A."/>
            <person name="Wambutt R."/>
            <person name="Wedler H."/>
            <person name="Zollner A."/>
            <person name="Hani J."/>
        </authorList>
    </citation>
    <scope>NUCLEOTIDE SEQUENCE [LARGE SCALE GENOMIC DNA]</scope>
    <source>
        <strain>ATCC 204508 / S288c</strain>
    </source>
</reference>
<reference key="2">
    <citation type="journal article" date="2014" name="G3 (Bethesda)">
        <title>The reference genome sequence of Saccharomyces cerevisiae: Then and now.</title>
        <authorList>
            <person name="Engel S.R."/>
            <person name="Dietrich F.S."/>
            <person name="Fisk D.G."/>
            <person name="Binkley G."/>
            <person name="Balakrishnan R."/>
            <person name="Costanzo M.C."/>
            <person name="Dwight S.S."/>
            <person name="Hitz B.C."/>
            <person name="Karra K."/>
            <person name="Nash R.S."/>
            <person name="Weng S."/>
            <person name="Wong E.D."/>
            <person name="Lloyd P."/>
            <person name="Skrzypek M.S."/>
            <person name="Miyasato S.R."/>
            <person name="Simison M."/>
            <person name="Cherry J.M."/>
        </authorList>
    </citation>
    <scope>GENOME REANNOTATION</scope>
    <source>
        <strain>ATCC 204508 / S288c</strain>
    </source>
</reference>
<reference key="3">
    <citation type="journal article" date="2007" name="Genome Res.">
        <title>Approaching a complete repository of sequence-verified protein-encoding clones for Saccharomyces cerevisiae.</title>
        <authorList>
            <person name="Hu Y."/>
            <person name="Rolfs A."/>
            <person name="Bhullar B."/>
            <person name="Murthy T.V.S."/>
            <person name="Zhu C."/>
            <person name="Berger M.F."/>
            <person name="Camargo A.A."/>
            <person name="Kelley F."/>
            <person name="McCarron S."/>
            <person name="Jepson D."/>
            <person name="Richardson A."/>
            <person name="Raphael J."/>
            <person name="Moreira D."/>
            <person name="Taycher E."/>
            <person name="Zuo D."/>
            <person name="Mohr S."/>
            <person name="Kane M.F."/>
            <person name="Williamson J."/>
            <person name="Simpson A.J.G."/>
            <person name="Bulyk M.L."/>
            <person name="Harlow E."/>
            <person name="Marsischky G."/>
            <person name="Kolodner R.D."/>
            <person name="LaBaer J."/>
        </authorList>
    </citation>
    <scope>NUCLEOTIDE SEQUENCE [GENOMIC DNA]</scope>
    <source>
        <strain>ATCC 204508 / S288c</strain>
    </source>
</reference>
<reference key="4">
    <citation type="journal article" date="2003" name="Nature">
        <title>Global analysis of protein localization in budding yeast.</title>
        <authorList>
            <person name="Huh W.-K."/>
            <person name="Falvo J.V."/>
            <person name="Gerke L.C."/>
            <person name="Carroll A.S."/>
            <person name="Howson R.W."/>
            <person name="Weissman J.S."/>
            <person name="O'Shea E.K."/>
        </authorList>
    </citation>
    <scope>SUBCELLULAR LOCATION [LARGE SCALE ANALYSIS]</scope>
</reference>
<reference key="5">
    <citation type="journal article" date="2003" name="Nature">
        <title>Global analysis of protein expression in yeast.</title>
        <authorList>
            <person name="Ghaemmaghami S."/>
            <person name="Huh W.-K."/>
            <person name="Bower K."/>
            <person name="Howson R.W."/>
            <person name="Belle A."/>
            <person name="Dephoure N."/>
            <person name="O'Shea E.K."/>
            <person name="Weissman J.S."/>
        </authorList>
    </citation>
    <scope>LEVEL OF PROTEIN EXPRESSION [LARGE SCALE ANALYSIS]</scope>
</reference>
<reference key="6">
    <citation type="journal article" date="2007" name="Genetics">
        <title>The alternative pathway of glutathione degradation is mediated by a novel protein complex involving three new genes in Saccharomyces cerevisiae.</title>
        <authorList>
            <person name="Ganguli D."/>
            <person name="Kumar C."/>
            <person name="Bachhawat A.K."/>
        </authorList>
    </citation>
    <scope>FUNCTION</scope>
    <scope>IDENTIFICATION IN THE GSH DEGRADOSOMAL COMPLEX</scope>
    <scope>SUBCELLULAR LOCATION</scope>
</reference>
<protein>
    <recommendedName>
        <fullName>Probable glutamine amidotransferase DUG3</fullName>
    </recommendedName>
    <alternativeName>
        <fullName>Deficient in utilization of glutathione protein 3</fullName>
    </alternativeName>
    <alternativeName>
        <fullName>GSH degradosomal complex subunit DUG3</fullName>
    </alternativeName>
</protein>